<keyword id="KW-0489">Methyltransferase</keyword>
<keyword id="KW-0949">S-adenosyl-L-methionine</keyword>
<keyword id="KW-0808">Transferase</keyword>
<organism>
    <name type="scientific">Streptococcus pyogenes serotype M18 (strain MGAS8232)</name>
    <dbReference type="NCBI Taxonomy" id="186103"/>
    <lineage>
        <taxon>Bacteria</taxon>
        <taxon>Bacillati</taxon>
        <taxon>Bacillota</taxon>
        <taxon>Bacilli</taxon>
        <taxon>Lactobacillales</taxon>
        <taxon>Streptococcaceae</taxon>
        <taxon>Streptococcus</taxon>
    </lineage>
</organism>
<name>Y1360_STRP8</name>
<accession>Q8P0H4</accession>
<protein>
    <recommendedName>
        <fullName>Uncharacterized RNA methyltransferase spyM18_1360</fullName>
        <ecNumber>2.1.1.-</ecNumber>
    </recommendedName>
</protein>
<proteinExistence type="inferred from homology"/>
<comment type="similarity">
    <text evidence="2">Belongs to the class I-like SAM-binding methyltransferase superfamily. RNA M5U methyltransferase family.</text>
</comment>
<feature type="chain" id="PRO_0000162041" description="Uncharacterized RNA methyltransferase spyM18_1360">
    <location>
        <begin position="1"/>
        <end position="462"/>
    </location>
</feature>
<feature type="domain" description="TRAM" evidence="1">
    <location>
        <begin position="12"/>
        <end position="70"/>
    </location>
</feature>
<feature type="active site" description="Nucleophile" evidence="2">
    <location>
        <position position="419"/>
    </location>
</feature>
<feature type="binding site" evidence="2">
    <location>
        <position position="294"/>
    </location>
    <ligand>
        <name>S-adenosyl-L-methionine</name>
        <dbReference type="ChEBI" id="CHEBI:59789"/>
    </ligand>
</feature>
<feature type="binding site" evidence="2">
    <location>
        <position position="323"/>
    </location>
    <ligand>
        <name>S-adenosyl-L-methionine</name>
        <dbReference type="ChEBI" id="CHEBI:59789"/>
    </ligand>
</feature>
<feature type="binding site" evidence="2">
    <location>
        <position position="344"/>
    </location>
    <ligand>
        <name>S-adenosyl-L-methionine</name>
        <dbReference type="ChEBI" id="CHEBI:59789"/>
    </ligand>
</feature>
<feature type="binding site" evidence="2">
    <location>
        <position position="392"/>
    </location>
    <ligand>
        <name>S-adenosyl-L-methionine</name>
        <dbReference type="ChEBI" id="CHEBI:59789"/>
    </ligand>
</feature>
<sequence>MVSPRKGKRIRMLKKNDIIQVAISDLSHEGAGVAKHDGFVFFVDNALPEEVIDMRVLKVNKNSGFGKVEAYHYLSPARNADVNLTYLRTGIADLGHLTYEDQLTFKKKQVQDSLYKIAGISDVTVESTIGMTEPLAYRNKAQVPVRRVNGQLETGFFRKHSHDLIPISDYYIQDKEIDRLINFTRDLLRRFDIKPYDETEQTGLLRNIVVRRGHYSGEMMVVLVTTRPKVFRVDQVIEKIVEAFPAVVSIIQNINDENTNAIFGKDFKTLYGKDTITDSMLGNNYAISAQSFYQVNTVMAEKLYQTAIAFSDLSKDDIVIDAYSGIGTIGLSFAKTVKAVYGVEVIEAAVRDAQQNAALNGITNAYFVADTAEHAMATWAKDGIKPSVILVDPPRKGLTESFIQASVAMGPQKITYVSCNPATMARDIKRYQELGYKLAKVQPVDLFPQTHHVECVVLLIKE</sequence>
<dbReference type="EC" id="2.1.1.-"/>
<dbReference type="EMBL" id="AE009949">
    <property type="protein sequence ID" value="AAL97957.1"/>
    <property type="molecule type" value="Genomic_DNA"/>
</dbReference>
<dbReference type="SMR" id="Q8P0H4"/>
<dbReference type="KEGG" id="spm:spyM18_1360"/>
<dbReference type="HOGENOM" id="CLU_014689_7_0_9"/>
<dbReference type="GO" id="GO:0070041">
    <property type="term" value="F:rRNA (uridine-C5-)-methyltransferase activity"/>
    <property type="evidence" value="ECO:0007669"/>
    <property type="project" value="TreeGrafter"/>
</dbReference>
<dbReference type="GO" id="GO:0070475">
    <property type="term" value="P:rRNA base methylation"/>
    <property type="evidence" value="ECO:0007669"/>
    <property type="project" value="TreeGrafter"/>
</dbReference>
<dbReference type="CDD" id="cd02440">
    <property type="entry name" value="AdoMet_MTases"/>
    <property type="match status" value="1"/>
</dbReference>
<dbReference type="FunFam" id="3.40.50.150:FF:000009">
    <property type="entry name" value="23S rRNA (Uracil(1939)-C(5))-methyltransferase RlmD"/>
    <property type="match status" value="1"/>
</dbReference>
<dbReference type="FunFam" id="2.40.50.1070:FF:000003">
    <property type="entry name" value="23S rRNA (Uracil-5-)-methyltransferase RumA"/>
    <property type="match status" value="1"/>
</dbReference>
<dbReference type="Gene3D" id="2.40.50.1070">
    <property type="match status" value="1"/>
</dbReference>
<dbReference type="Gene3D" id="2.40.50.140">
    <property type="entry name" value="Nucleic acid-binding proteins"/>
    <property type="match status" value="1"/>
</dbReference>
<dbReference type="Gene3D" id="3.40.50.150">
    <property type="entry name" value="Vaccinia Virus protein VP39"/>
    <property type="match status" value="1"/>
</dbReference>
<dbReference type="InterPro" id="IPR030390">
    <property type="entry name" value="MeTrfase_TrmA_AS"/>
</dbReference>
<dbReference type="InterPro" id="IPR030391">
    <property type="entry name" value="MeTrfase_TrmA_CS"/>
</dbReference>
<dbReference type="InterPro" id="IPR012340">
    <property type="entry name" value="NA-bd_OB-fold"/>
</dbReference>
<dbReference type="InterPro" id="IPR029063">
    <property type="entry name" value="SAM-dependent_MTases_sf"/>
</dbReference>
<dbReference type="InterPro" id="IPR002792">
    <property type="entry name" value="TRAM_dom"/>
</dbReference>
<dbReference type="InterPro" id="IPR010280">
    <property type="entry name" value="U5_MeTrfase_fam"/>
</dbReference>
<dbReference type="NCBIfam" id="TIGR00479">
    <property type="entry name" value="rumA"/>
    <property type="match status" value="1"/>
</dbReference>
<dbReference type="PANTHER" id="PTHR11061">
    <property type="entry name" value="RNA M5U METHYLTRANSFERASE"/>
    <property type="match status" value="1"/>
</dbReference>
<dbReference type="PANTHER" id="PTHR11061:SF30">
    <property type="entry name" value="TRNA (URACIL(54)-C(5))-METHYLTRANSFERASE"/>
    <property type="match status" value="1"/>
</dbReference>
<dbReference type="Pfam" id="PF01938">
    <property type="entry name" value="TRAM"/>
    <property type="match status" value="1"/>
</dbReference>
<dbReference type="Pfam" id="PF05958">
    <property type="entry name" value="tRNA_U5-meth_tr"/>
    <property type="match status" value="1"/>
</dbReference>
<dbReference type="SUPFAM" id="SSF50249">
    <property type="entry name" value="Nucleic acid-binding proteins"/>
    <property type="match status" value="1"/>
</dbReference>
<dbReference type="SUPFAM" id="SSF53335">
    <property type="entry name" value="S-adenosyl-L-methionine-dependent methyltransferases"/>
    <property type="match status" value="1"/>
</dbReference>
<dbReference type="PROSITE" id="PS51687">
    <property type="entry name" value="SAM_MT_RNA_M5U"/>
    <property type="match status" value="1"/>
</dbReference>
<dbReference type="PROSITE" id="PS50926">
    <property type="entry name" value="TRAM"/>
    <property type="match status" value="1"/>
</dbReference>
<dbReference type="PROSITE" id="PS01230">
    <property type="entry name" value="TRMA_1"/>
    <property type="match status" value="1"/>
</dbReference>
<dbReference type="PROSITE" id="PS01231">
    <property type="entry name" value="TRMA_2"/>
    <property type="match status" value="1"/>
</dbReference>
<reference key="1">
    <citation type="journal article" date="2002" name="Proc. Natl. Acad. Sci. U.S.A.">
        <title>Genome sequence and comparative microarray analysis of serotype M18 group A Streptococcus strains associated with acute rheumatic fever outbreaks.</title>
        <authorList>
            <person name="Smoot J.C."/>
            <person name="Barbian K.D."/>
            <person name="Van Gompel J.J."/>
            <person name="Smoot L.M."/>
            <person name="Chaussee M.S."/>
            <person name="Sylva G.L."/>
            <person name="Sturdevant D.E."/>
            <person name="Ricklefs S.M."/>
            <person name="Porcella S.F."/>
            <person name="Parkins L.D."/>
            <person name="Beres S.B."/>
            <person name="Campbell D.S."/>
            <person name="Smith T.M."/>
            <person name="Zhang Q."/>
            <person name="Kapur V."/>
            <person name="Daly J.A."/>
            <person name="Veasy L.G."/>
            <person name="Musser J.M."/>
        </authorList>
    </citation>
    <scope>NUCLEOTIDE SEQUENCE [LARGE SCALE GENOMIC DNA]</scope>
    <source>
        <strain>MGAS8232</strain>
    </source>
</reference>
<evidence type="ECO:0000255" key="1">
    <source>
        <dbReference type="PROSITE-ProRule" id="PRU00208"/>
    </source>
</evidence>
<evidence type="ECO:0000255" key="2">
    <source>
        <dbReference type="PROSITE-ProRule" id="PRU01024"/>
    </source>
</evidence>
<gene>
    <name type="ordered locus">spyM18_1360</name>
</gene>